<dbReference type="EMBL" id="Y15321">
    <property type="protein sequence ID" value="CAA75582.1"/>
    <property type="molecule type" value="mRNA"/>
</dbReference>
<dbReference type="RefSeq" id="XP_001388776.1">
    <property type="nucleotide sequence ID" value="XM_001388739.3"/>
</dbReference>
<dbReference type="SMR" id="O13418"/>
<dbReference type="PaxDb" id="5061-CADANGAP00000327"/>
<dbReference type="EnsemblFungi" id="CAK36884">
    <property type="protein sequence ID" value="CAK36884"/>
    <property type="gene ID" value="An01g03460"/>
</dbReference>
<dbReference type="GeneID" id="4978348"/>
<dbReference type="KEGG" id="ang:An01g03460"/>
<dbReference type="VEuPathDB" id="FungiDB:An01g03460"/>
<dbReference type="VEuPathDB" id="FungiDB:ASPNIDRAFT2_1142179"/>
<dbReference type="VEuPathDB" id="FungiDB:ATCC64974_20330"/>
<dbReference type="VEuPathDB" id="FungiDB:M747DRAFT_325203"/>
<dbReference type="eggNOG" id="KOG1678">
    <property type="taxonomic scope" value="Eukaryota"/>
</dbReference>
<dbReference type="OMA" id="YIRDAWK"/>
<dbReference type="OrthoDB" id="10255148at2759"/>
<dbReference type="GO" id="GO:0022625">
    <property type="term" value="C:cytosolic large ribosomal subunit"/>
    <property type="evidence" value="ECO:0007669"/>
    <property type="project" value="TreeGrafter"/>
</dbReference>
<dbReference type="GO" id="GO:0003723">
    <property type="term" value="F:RNA binding"/>
    <property type="evidence" value="ECO:0007669"/>
    <property type="project" value="TreeGrafter"/>
</dbReference>
<dbReference type="GO" id="GO:0003735">
    <property type="term" value="F:structural constituent of ribosome"/>
    <property type="evidence" value="ECO:0007669"/>
    <property type="project" value="InterPro"/>
</dbReference>
<dbReference type="GO" id="GO:0002181">
    <property type="term" value="P:cytoplasmic translation"/>
    <property type="evidence" value="ECO:0007669"/>
    <property type="project" value="TreeGrafter"/>
</dbReference>
<dbReference type="FunFam" id="3.40.1120.10:FF:000001">
    <property type="entry name" value="Ribosomal protein L15"/>
    <property type="match status" value="1"/>
</dbReference>
<dbReference type="Gene3D" id="3.40.1120.10">
    <property type="entry name" value="Ribosomal protein l15e"/>
    <property type="match status" value="1"/>
</dbReference>
<dbReference type="InterPro" id="IPR024794">
    <property type="entry name" value="Rbsml_eL15_core_dom_sf"/>
</dbReference>
<dbReference type="InterPro" id="IPR000439">
    <property type="entry name" value="Ribosomal_eL15"/>
</dbReference>
<dbReference type="InterPro" id="IPR020925">
    <property type="entry name" value="Ribosomal_eL15_CS"/>
</dbReference>
<dbReference type="InterPro" id="IPR012678">
    <property type="entry name" value="Ribosomal_uL23/eL15/eS24_sf"/>
</dbReference>
<dbReference type="NCBIfam" id="NF003269">
    <property type="entry name" value="PRK04243.1"/>
    <property type="match status" value="1"/>
</dbReference>
<dbReference type="PANTHER" id="PTHR11847:SF4">
    <property type="entry name" value="LARGE RIBOSOMAL SUBUNIT PROTEIN EL15"/>
    <property type="match status" value="1"/>
</dbReference>
<dbReference type="PANTHER" id="PTHR11847">
    <property type="entry name" value="RIBOSOMAL PROTEIN L15"/>
    <property type="match status" value="1"/>
</dbReference>
<dbReference type="Pfam" id="PF00827">
    <property type="entry name" value="Ribosomal_L15e"/>
    <property type="match status" value="1"/>
</dbReference>
<dbReference type="SMART" id="SM01384">
    <property type="entry name" value="Ribosomal_L15e"/>
    <property type="match status" value="1"/>
</dbReference>
<dbReference type="SUPFAM" id="SSF54189">
    <property type="entry name" value="Ribosomal proteins S24e, L23 and L15e"/>
    <property type="match status" value="1"/>
</dbReference>
<dbReference type="PROSITE" id="PS01194">
    <property type="entry name" value="RIBOSOMAL_L15E"/>
    <property type="match status" value="1"/>
</dbReference>
<gene>
    <name type="primary">rpl15</name>
</gene>
<feature type="chain" id="PRO_0000127562" description="Large ribosomal subunit protein eL15">
    <location>
        <begin position="1"/>
        <end position="203"/>
    </location>
</feature>
<feature type="region of interest" description="Disordered" evidence="1">
    <location>
        <begin position="166"/>
        <end position="203"/>
    </location>
</feature>
<feature type="compositionally biased region" description="Basic residues" evidence="1">
    <location>
        <begin position="169"/>
        <end position="192"/>
    </location>
</feature>
<feature type="compositionally biased region" description="Polar residues" evidence="1">
    <location>
        <begin position="193"/>
        <end position="203"/>
    </location>
</feature>
<accession>O13418</accession>
<sequence>MGALKYVEEIQKKKQSDVIRFLLRVRCWELRQLNAIHRASRPSRPDKARRLGYKAKQGYVVYRIRVRRGGRKRPAPKGATYGKPTNMGINQLKYQRALRATAEERVGRRCANLRVLNSYWINQDSTYKYFEVILVDPQHKAIRRDARINWICNAVHKHREARGLTATGKKSRGINKGHRYNNTRSGRRHTWKRQNTQSYWRYR</sequence>
<reference key="1">
    <citation type="submission" date="1997-10" db="EMBL/GenBank/DDBJ databases">
        <authorList>
            <person name="Schaap P.J."/>
            <person name="Muller Y."/>
            <person name="Visser J."/>
        </authorList>
    </citation>
    <scope>NUCLEOTIDE SEQUENCE [MRNA]</scope>
    <source>
        <strain>ATCC 9029 / NRRL 3 / CBS 120.49 / DSM 2466 / N400 / FGSC 732</strain>
    </source>
</reference>
<proteinExistence type="evidence at transcript level"/>
<comment type="similarity">
    <text evidence="2">Belongs to the eukaryotic ribosomal protein eL15 family.</text>
</comment>
<organism>
    <name type="scientific">Aspergillus niger</name>
    <dbReference type="NCBI Taxonomy" id="5061"/>
    <lineage>
        <taxon>Eukaryota</taxon>
        <taxon>Fungi</taxon>
        <taxon>Dikarya</taxon>
        <taxon>Ascomycota</taxon>
        <taxon>Pezizomycotina</taxon>
        <taxon>Eurotiomycetes</taxon>
        <taxon>Eurotiomycetidae</taxon>
        <taxon>Eurotiales</taxon>
        <taxon>Aspergillaceae</taxon>
        <taxon>Aspergillus</taxon>
        <taxon>Aspergillus subgen. Circumdati</taxon>
    </lineage>
</organism>
<evidence type="ECO:0000256" key="1">
    <source>
        <dbReference type="SAM" id="MobiDB-lite"/>
    </source>
</evidence>
<evidence type="ECO:0000305" key="2"/>
<keyword id="KW-0687">Ribonucleoprotein</keyword>
<keyword id="KW-0689">Ribosomal protein</keyword>
<protein>
    <recommendedName>
        <fullName evidence="2">Large ribosomal subunit protein eL15</fullName>
    </recommendedName>
    <alternativeName>
        <fullName>60S ribosomal protein L15</fullName>
    </alternativeName>
</protein>
<name>RL15_ASPNG</name>